<keyword id="KW-0574">Periplasm</keyword>
<keyword id="KW-1185">Reference proteome</keyword>
<keyword id="KW-0964">Secreted</keyword>
<keyword id="KW-0732">Signal</keyword>
<gene>
    <name type="primary">tcpS</name>
    <name type="ordered locus">VC_0834</name>
</gene>
<sequence>MNIKLSFISIAFLSLSFNVAANEFEKSQEHYKSVTDLKNKIEILELEKKITELSGEIRNARMPKIDKSAPVLSPQPVVKSSEELQKSIEHIEEELKVELAYLVNNGQQKKYTFNLNGKLITLVNGDFVNGWKFIEDQNKIQFSKGNKVIDVN</sequence>
<feature type="signal peptide" evidence="1">
    <location>
        <begin position="1"/>
        <end position="20"/>
    </location>
</feature>
<feature type="chain" id="PRO_0000022478" description="Toxin coregulated pilus biosynthesis protein S">
    <location>
        <begin position="21"/>
        <end position="152"/>
    </location>
</feature>
<feature type="sequence conflict" description="In Ref. 1; CAA45461." evidence="2" ref="1">
    <original>S</original>
    <variation>F</variation>
    <location>
        <position position="143"/>
    </location>
</feature>
<evidence type="ECO:0000255" key="1"/>
<evidence type="ECO:0000305" key="2"/>
<comment type="function">
    <text>The toxin coregulated pilus (TCP) is essential for successful colonization of the small intestine.</text>
</comment>
<comment type="subcellular location">
    <subcellularLocation>
        <location>Periplasm</location>
    </subcellularLocation>
    <subcellularLocation>
        <location>Secreted</location>
    </subcellularLocation>
</comment>
<protein>
    <recommendedName>
        <fullName>Toxin coregulated pilus biosynthesis protein S</fullName>
    </recommendedName>
    <alternativeName>
        <fullName>TCP pilus biosynthesis protein TcpS</fullName>
    </alternativeName>
</protein>
<proteinExistence type="inferred from homology"/>
<dbReference type="EMBL" id="X64098">
    <property type="protein sequence ID" value="CAA45461.1"/>
    <property type="molecule type" value="Genomic_DNA"/>
</dbReference>
<dbReference type="EMBL" id="AE003852">
    <property type="protein sequence ID" value="AAF93997.1"/>
    <property type="molecule type" value="Genomic_DNA"/>
</dbReference>
<dbReference type="PIR" id="E82275">
    <property type="entry name" value="E82275"/>
</dbReference>
<dbReference type="RefSeq" id="NP_230482.1">
    <property type="nucleotide sequence ID" value="NC_002505.1"/>
</dbReference>
<dbReference type="RefSeq" id="WP_001022338.1">
    <property type="nucleotide sequence ID" value="NZ_LT906614.1"/>
</dbReference>
<dbReference type="SMR" id="P29484"/>
<dbReference type="STRING" id="243277.VC_0834"/>
<dbReference type="DNASU" id="2614501"/>
<dbReference type="EnsemblBacteria" id="AAF93997">
    <property type="protein sequence ID" value="AAF93997"/>
    <property type="gene ID" value="VC_0834"/>
</dbReference>
<dbReference type="KEGG" id="vch:VC_0834"/>
<dbReference type="PATRIC" id="fig|243277.26.peg.795"/>
<dbReference type="HOGENOM" id="CLU_1721585_0_0_6"/>
<dbReference type="Proteomes" id="UP000000584">
    <property type="component" value="Chromosome 1"/>
</dbReference>
<dbReference type="GO" id="GO:0005576">
    <property type="term" value="C:extracellular region"/>
    <property type="evidence" value="ECO:0007669"/>
    <property type="project" value="UniProtKB-SubCell"/>
</dbReference>
<dbReference type="GO" id="GO:0042597">
    <property type="term" value="C:periplasmic space"/>
    <property type="evidence" value="ECO:0007669"/>
    <property type="project" value="UniProtKB-SubCell"/>
</dbReference>
<dbReference type="InterPro" id="IPR020213">
    <property type="entry name" value="Toxin-coreg_pilus_synth_TcpS"/>
</dbReference>
<dbReference type="Pfam" id="PF17456">
    <property type="entry name" value="TcpS"/>
    <property type="match status" value="1"/>
</dbReference>
<organism>
    <name type="scientific">Vibrio cholerae serotype O1 (strain ATCC 39315 / El Tor Inaba N16961)</name>
    <dbReference type="NCBI Taxonomy" id="243277"/>
    <lineage>
        <taxon>Bacteria</taxon>
        <taxon>Pseudomonadati</taxon>
        <taxon>Pseudomonadota</taxon>
        <taxon>Gammaproteobacteria</taxon>
        <taxon>Vibrionales</taxon>
        <taxon>Vibrionaceae</taxon>
        <taxon>Vibrio</taxon>
    </lineage>
</organism>
<accession>P29484</accession>
<accession>Q9KTR1</accession>
<reference key="1">
    <citation type="journal article" date="1993" name="Gene">
        <title>Genetic organization and sequence of the promoter-distal region of the tcp gene cluster of Vibrio cholerae.</title>
        <authorList>
            <person name="Ogierman M.A."/>
            <person name="Zabihi S."/>
            <person name="Mourtzios L."/>
            <person name="Manning P.A."/>
        </authorList>
    </citation>
    <scope>NUCLEOTIDE SEQUENCE [GENOMIC DNA]</scope>
    <source>
        <strain>Classical Inaba Z17561 / Serotype O1</strain>
    </source>
</reference>
<reference key="2">
    <citation type="journal article" date="2000" name="Nature">
        <title>DNA sequence of both chromosomes of the cholera pathogen Vibrio cholerae.</title>
        <authorList>
            <person name="Heidelberg J.F."/>
            <person name="Eisen J.A."/>
            <person name="Nelson W.C."/>
            <person name="Clayton R.A."/>
            <person name="Gwinn M.L."/>
            <person name="Dodson R.J."/>
            <person name="Haft D.H."/>
            <person name="Hickey E.K."/>
            <person name="Peterson J.D."/>
            <person name="Umayam L.A."/>
            <person name="Gill S.R."/>
            <person name="Nelson K.E."/>
            <person name="Read T.D."/>
            <person name="Tettelin H."/>
            <person name="Richardson D.L."/>
            <person name="Ermolaeva M.D."/>
            <person name="Vamathevan J.J."/>
            <person name="Bass S."/>
            <person name="Qin H."/>
            <person name="Dragoi I."/>
            <person name="Sellers P."/>
            <person name="McDonald L.A."/>
            <person name="Utterback T.R."/>
            <person name="Fleischmann R.D."/>
            <person name="Nierman W.C."/>
            <person name="White O."/>
            <person name="Salzberg S.L."/>
            <person name="Smith H.O."/>
            <person name="Colwell R.R."/>
            <person name="Mekalanos J.J."/>
            <person name="Venter J.C."/>
            <person name="Fraser C.M."/>
        </authorList>
    </citation>
    <scope>NUCLEOTIDE SEQUENCE [LARGE SCALE GENOMIC DNA]</scope>
    <source>
        <strain>ATCC 39315 / El Tor Inaba N16961</strain>
    </source>
</reference>
<name>TCPS_VIBCH</name>